<name>NRP1_RAT</name>
<accession>Q9QWJ9</accession>
<comment type="function">
    <text evidence="1 2">Cell-surface receptor involved in the development of the cardiovascular system, in angiogenesis, in the formation of certain neuronal circuits and in organogenesis outside the nervous system. Mediates the chemorepulsant activity of semaphorins. Recognizes a C-end rule (CendR) motif R/KXXR/K on its ligands which causes cellular internalization and vascular leakage. It binds to semaphorin 3A, the PLGF-2 isoform of PGF, the VEGF165 isoform of VEGFA and VEGFB (By similarity). Coexpression with KDR results in increased VEGF165 binding to KDR as well as increased chemotaxis. Regulates VEGF-induced angiogenesis. Binding to VEGFA initiates a signaling pathway needed for motor neuron axon guidance and cell body migration, including for the caudal migration of facial motor neurons from rhombomere 4 to rhombomere 6 during embryonic development (By similarity). Regulates mitochondrial iron transport via interaction with ABCB8/MITOSUR (By similarity).</text>
</comment>
<comment type="subunit">
    <text evidence="1 2">Homodimer, and heterodimer with NRP2. Binds PLXNB1 (By similarity). Interacts with FER. Interacts with VEGFA (By similarity). Interacts with ABCB8/MITOSUR in mitochondria (By similarity).</text>
</comment>
<comment type="subcellular location">
    <subcellularLocation>
        <location evidence="1">Mitochondrion membrane</location>
        <topology evidence="3">Single-pass type I membrane protein</topology>
    </subcellularLocation>
    <subcellularLocation>
        <location evidence="1">Cell membrane</location>
        <topology evidence="3">Single-pass type I membrane protein</topology>
    </subcellularLocation>
    <subcellularLocation>
        <location evidence="1">Cytoplasm</location>
    </subcellularLocation>
</comment>
<comment type="tissue specificity">
    <text evidence="8 9">Found in the embryonic nervous system (PubMed:9288754). Expressed in dorsal root ganglia (PubMed:28270793).</text>
</comment>
<comment type="induction">
    <text evidence="8">Increased in dorsal root ganglia in response to injury caused by dorsal rhizotomy (PubMed:28270793). Increased in dorsal root ganglia in response to both sciatic nerve crush and transection injury (PubMed:28270793).</text>
</comment>
<comment type="domain">
    <text evidence="1">The tandem CUB domains mediate binding to semaphorin, while the tandem F5/8 domains are responsible for heparin and VEGF binding. F5/8 domains mediate the recognition and binding to R/KXXR/K CendR motifs.</text>
</comment>
<comment type="similarity">
    <text evidence="10">Belongs to the neuropilin family.</text>
</comment>
<reference key="1">
    <citation type="journal article" date="1997" name="Cell">
        <title>Neuropilin is a semaphorin III receptor.</title>
        <authorList>
            <person name="Kolodkin A.L."/>
            <person name="Levengood D.V."/>
            <person name="Rowe E.G."/>
            <person name="Tai Y.-T."/>
            <person name="Giger R.J."/>
            <person name="Ginty D.D."/>
        </authorList>
    </citation>
    <scope>NUCLEOTIDE SEQUENCE [MRNA]</scope>
    <scope>TISSUE SPECIFICITY</scope>
    <source>
        <strain>Sprague-Dawley</strain>
    </source>
</reference>
<reference key="2">
    <citation type="journal article" date="2004" name="Genome Res.">
        <title>The status, quality, and expansion of the NIH full-length cDNA project: the Mammalian Gene Collection (MGC).</title>
        <authorList>
            <consortium name="The MGC Project Team"/>
        </authorList>
    </citation>
    <scope>NUCLEOTIDE SEQUENCE [LARGE SCALE MRNA]</scope>
    <source>
        <tissue>Kidney</tissue>
    </source>
</reference>
<reference key="3">
    <citation type="journal article" date="2017" name="Front. Neurol.">
        <title>Expression of Semaphorins, Neuropilins, VEGF, and Tenascins in Rat and Human Primary Sensory Neurons after a Dorsal Root Injury.</title>
        <authorList>
            <person name="Lindholm T."/>
            <person name="Risling M."/>
            <person name="Carlstedt T."/>
            <person name="Hammarberg H."/>
            <person name="Wallquist W."/>
            <person name="Cullheim S."/>
            <person name="Skoeld M.K."/>
        </authorList>
    </citation>
    <scope>TISSUE SPECIFICITY</scope>
    <scope>INDUCTION BY INJURY</scope>
</reference>
<reference key="4">
    <citation type="journal article" date="2007" name="Proc. Natl. Acad. Sci. U.S.A.">
        <title>Structural basis for ligand and heparin binding to neuropilin B domains.</title>
        <authorList>
            <person name="Vander Kooi C.W."/>
            <person name="Jusino M.A."/>
            <person name="Perman B."/>
            <person name="Neau D.B."/>
            <person name="Bellamy H.D."/>
            <person name="Leahy D.J."/>
        </authorList>
    </citation>
    <scope>X-RAY CRYSTALLOGRAPHY (2.15 ANGSTROMS) OF 273-586 IN COMPLEX WITH VEGF FRAGMENT</scope>
    <scope>HEPARIN-BINDING</scope>
    <scope>DISULFIDE BONDS</scope>
</reference>
<sequence length="922" mass="103082">MERGLPLLCATLALALALAGAFRSDKCGGTIKIENPGYLTSPGYPHSYHPSEKCEWLIQAPEPYQRIMINFNPHFDLEDRDCKYDYVEVIDGENEGGRLWGKFCGKIAPSPVVSSGPFLFIKFVSDYETHGAGFSIRYEIFKRGPECSQNYTAPTGVIKSPGFPEKYPNSLECTYIIFAPKMSEIILEFESFDLEQDSNPPGGVFCRYDRLEIWDGFPEVGPHIGRYCGQKTPGRIRSSSGILSMVFYTDSAIAKEGFSANYSVLQSSISEDFKCMEALGMESGEIHSDQITASSQYGTNWSVERSRLNYPENGWTPGEDSYREWIQVDLGLLRFVTAVGTQGAISKETKKKYYVKTYRVDISSNGEDWITLKEGNKAIIFQGNTNPTDVVFGVFPKPLITRFVRIKPASWETGISMRFEVYGCKITDYPCSGMLGMVSGLISDSQITASNQGDRNWMPENIRLVTSRTGWALPPSPHPYINEWLQVDLGDEKIVRGVIIQGGKHRENKVFMRKFKIAYSNNGSDWKMIMDDSKRKAKSFEGNNNYDTPELRAFTPLSTRFIRIYPERATHSGLGLRMELLGCEVEVPTAGPTTPNGNPVDECDDDQANCHSGTGDDFQLTGGTTVLATEKPTIIDSTIQSEFPTYGFNCEFGWGSHKTFCHWEHDSHAQLRWRVLTSKTGPIQDHTGDGNFIYSQADENQKGKVARLVSPVVYSQSSAHCMTFWYHMSGSHVGTLRVKLHYQKPEEYDQLVWMVVGHQGDHWKEGRVLLHKSLKLYQVIFEGEIGKGNLGGIAVDDISINNHIPQEDCAKPTDLDKKNTEIKIDETGSTPGYEEGKGDKNISRKPGNVLKTLDPILITIIAMSALGVLLGAVCGVVLYCACWHNGMSERNLSALENYNFELVDGVKLKKDKLNPQSNYSEA</sequence>
<proteinExistence type="evidence at protein level"/>
<protein>
    <recommendedName>
        <fullName>Neuropilin-1</fullName>
    </recommendedName>
    <alternativeName>
        <fullName>Vascular endothelial cell growth factor 165 receptor</fullName>
    </alternativeName>
    <cdAntigenName>CD304</cdAntigenName>
</protein>
<evidence type="ECO:0000250" key="1">
    <source>
        <dbReference type="UniProtKB" id="O14786"/>
    </source>
</evidence>
<evidence type="ECO:0000250" key="2">
    <source>
        <dbReference type="UniProtKB" id="P97333"/>
    </source>
</evidence>
<evidence type="ECO:0000255" key="3"/>
<evidence type="ECO:0000255" key="4">
    <source>
        <dbReference type="PROSITE-ProRule" id="PRU00059"/>
    </source>
</evidence>
<evidence type="ECO:0000255" key="5">
    <source>
        <dbReference type="PROSITE-ProRule" id="PRU00081"/>
    </source>
</evidence>
<evidence type="ECO:0000255" key="6">
    <source>
        <dbReference type="PROSITE-ProRule" id="PRU00128"/>
    </source>
</evidence>
<evidence type="ECO:0000269" key="7">
    <source>
    </source>
</evidence>
<evidence type="ECO:0000269" key="8">
    <source>
    </source>
</evidence>
<evidence type="ECO:0000269" key="9">
    <source>
    </source>
</evidence>
<evidence type="ECO:0000305" key="10"/>
<evidence type="ECO:0000305" key="11">
    <source>
    </source>
</evidence>
<evidence type="ECO:0007829" key="12">
    <source>
        <dbReference type="PDB" id="2ORX"/>
    </source>
</evidence>
<evidence type="ECO:0007829" key="13">
    <source>
        <dbReference type="PDB" id="2ORZ"/>
    </source>
</evidence>
<feature type="signal peptide" evidence="3">
    <location>
        <begin position="1"/>
        <end position="21"/>
    </location>
</feature>
<feature type="chain" id="PRO_0000021861" description="Neuropilin-1">
    <location>
        <begin position="22"/>
        <end position="922"/>
    </location>
</feature>
<feature type="topological domain" description="Extracellular" evidence="3">
    <location>
        <begin position="22"/>
        <end position="855"/>
    </location>
</feature>
<feature type="transmembrane region" description="Helical" evidence="3">
    <location>
        <begin position="856"/>
        <end position="880"/>
    </location>
</feature>
<feature type="topological domain" description="Cytoplasmic" evidence="3">
    <location>
        <begin position="881"/>
        <end position="922"/>
    </location>
</feature>
<feature type="domain" description="CUB 1" evidence="4">
    <location>
        <begin position="27"/>
        <end position="141"/>
    </location>
</feature>
<feature type="domain" description="CUB 2" evidence="4">
    <location>
        <begin position="147"/>
        <end position="265"/>
    </location>
</feature>
<feature type="domain" description="F5/8 type C 1" evidence="5">
    <location>
        <begin position="275"/>
        <end position="424"/>
    </location>
</feature>
<feature type="domain" description="F5/8 type C 2" evidence="5">
    <location>
        <begin position="431"/>
        <end position="583"/>
    </location>
</feature>
<feature type="domain" description="MAM" evidence="6">
    <location>
        <begin position="645"/>
        <end position="811"/>
    </location>
</feature>
<feature type="binding site" evidence="1">
    <location>
        <position position="195"/>
    </location>
    <ligand>
        <name>Ca(2+)</name>
        <dbReference type="ChEBI" id="CHEBI:29108"/>
    </ligand>
</feature>
<feature type="binding site" evidence="1">
    <location>
        <position position="209"/>
    </location>
    <ligand>
        <name>Ca(2+)</name>
        <dbReference type="ChEBI" id="CHEBI:29108"/>
    </ligand>
</feature>
<feature type="binding site" evidence="1">
    <location>
        <position position="250"/>
    </location>
    <ligand>
        <name>Ca(2+)</name>
        <dbReference type="ChEBI" id="CHEBI:29108"/>
    </ligand>
</feature>
<feature type="modified residue" description="Phosphoserine" evidence="2">
    <location>
        <position position="893"/>
    </location>
</feature>
<feature type="glycosylation site" description="N-linked (GlcNAc...) asparagine" evidence="3">
    <location>
        <position position="150"/>
    </location>
</feature>
<feature type="glycosylation site" description="N-linked (GlcNAc...) asparagine" evidence="3">
    <location>
        <position position="261"/>
    </location>
</feature>
<feature type="glycosylation site" description="N-linked (GlcNAc...) asparagine" evidence="3">
    <location>
        <position position="300"/>
    </location>
</feature>
<feature type="glycosylation site" description="N-linked (GlcNAc...) asparagine" evidence="3">
    <location>
        <position position="522"/>
    </location>
</feature>
<feature type="glycosylation site" description="O-linked (Xyl...) (chondroitin sulfate) serine; alternate" evidence="1">
    <location>
        <position position="612"/>
    </location>
</feature>
<feature type="glycosylation site" description="O-linked (Xyl...) (heparan sulfate) serine; alternate" evidence="1">
    <location>
        <position position="612"/>
    </location>
</feature>
<feature type="glycosylation site" description="O-linked (Xyl...) (chondroitin sulfate) serine" evidence="1">
    <location>
        <position position="829"/>
    </location>
</feature>
<feature type="glycosylation site" description="N-linked (GlcNAc...) asparagine" evidence="3">
    <location>
        <position position="841"/>
    </location>
</feature>
<feature type="disulfide bond" evidence="11">
    <location>
        <begin position="27"/>
        <end position="54"/>
    </location>
</feature>
<feature type="disulfide bond" evidence="11">
    <location>
        <begin position="82"/>
        <end position="104"/>
    </location>
</feature>
<feature type="disulfide bond" evidence="1">
    <location>
        <begin position="147"/>
        <end position="173"/>
    </location>
</feature>
<feature type="disulfide bond" evidence="1">
    <location>
        <begin position="206"/>
        <end position="228"/>
    </location>
</feature>
<feature type="disulfide bond" evidence="7">
    <location>
        <begin position="275"/>
        <end position="424"/>
    </location>
</feature>
<feature type="disulfide bond" evidence="7">
    <location>
        <begin position="431"/>
        <end position="583"/>
    </location>
</feature>
<feature type="turn" evidence="13">
    <location>
        <begin position="281"/>
        <end position="283"/>
    </location>
</feature>
<feature type="helix" evidence="13">
    <location>
        <begin position="288"/>
        <end position="290"/>
    </location>
</feature>
<feature type="strand" evidence="13">
    <location>
        <begin position="291"/>
        <end position="294"/>
    </location>
</feature>
<feature type="helix" evidence="13">
    <location>
        <begin position="299"/>
        <end position="301"/>
    </location>
</feature>
<feature type="helix" evidence="13">
    <location>
        <begin position="303"/>
        <end position="305"/>
    </location>
</feature>
<feature type="strand" evidence="13">
    <location>
        <begin position="326"/>
        <end position="342"/>
    </location>
</feature>
<feature type="turn" evidence="13">
    <location>
        <begin position="347"/>
        <end position="349"/>
    </location>
</feature>
<feature type="strand" evidence="13">
    <location>
        <begin position="352"/>
        <end position="368"/>
    </location>
</feature>
<feature type="strand" evidence="13">
    <location>
        <begin position="385"/>
        <end position="389"/>
    </location>
</feature>
<feature type="strand" evidence="13">
    <location>
        <begin position="391"/>
        <end position="414"/>
    </location>
</feature>
<feature type="strand" evidence="13">
    <location>
        <begin position="417"/>
        <end position="424"/>
    </location>
</feature>
<feature type="helix" evidence="13">
    <location>
        <begin position="426"/>
        <end position="428"/>
    </location>
</feature>
<feature type="strand" evidence="12">
    <location>
        <begin position="429"/>
        <end position="431"/>
    </location>
</feature>
<feature type="strand" evidence="13">
    <location>
        <begin position="432"/>
        <end position="434"/>
    </location>
</feature>
<feature type="turn" evidence="12">
    <location>
        <begin position="437"/>
        <end position="439"/>
    </location>
</feature>
<feature type="helix" evidence="13">
    <location>
        <begin position="442"/>
        <end position="444"/>
    </location>
</feature>
<feature type="strand" evidence="13">
    <location>
        <begin position="445"/>
        <end position="449"/>
    </location>
</feature>
<feature type="helix" evidence="13">
    <location>
        <begin position="459"/>
        <end position="462"/>
    </location>
</feature>
<feature type="turn" evidence="13">
    <location>
        <begin position="464"/>
        <end position="466"/>
    </location>
</feature>
<feature type="strand" evidence="13">
    <location>
        <begin position="467"/>
        <end position="469"/>
    </location>
</feature>
<feature type="strand" evidence="13">
    <location>
        <begin position="471"/>
        <end position="473"/>
    </location>
</feature>
<feature type="strand" evidence="13">
    <location>
        <begin position="485"/>
        <end position="501"/>
    </location>
</feature>
<feature type="strand" evidence="13">
    <location>
        <begin position="503"/>
        <end position="505"/>
    </location>
</feature>
<feature type="strand" evidence="13">
    <location>
        <begin position="508"/>
        <end position="510"/>
    </location>
</feature>
<feature type="strand" evidence="13">
    <location>
        <begin position="512"/>
        <end position="525"/>
    </location>
</feature>
<feature type="strand" evidence="13">
    <location>
        <begin position="534"/>
        <end position="537"/>
    </location>
</feature>
<feature type="strand" evidence="13">
    <location>
        <begin position="544"/>
        <end position="547"/>
    </location>
</feature>
<feature type="strand" evidence="13">
    <location>
        <begin position="550"/>
        <end position="570"/>
    </location>
</feature>
<feature type="strand" evidence="13">
    <location>
        <begin position="573"/>
        <end position="583"/>
    </location>
</feature>
<gene>
    <name type="primary">Nrp1</name>
</gene>
<keyword id="KW-0002">3D-structure</keyword>
<keyword id="KW-0037">Angiogenesis</keyword>
<keyword id="KW-0106">Calcium</keyword>
<keyword id="KW-1003">Cell membrane</keyword>
<keyword id="KW-0963">Cytoplasm</keyword>
<keyword id="KW-0217">Developmental protein</keyword>
<keyword id="KW-0221">Differentiation</keyword>
<keyword id="KW-1015">Disulfide bond</keyword>
<keyword id="KW-0325">Glycoprotein</keyword>
<keyword id="KW-0357">Heparan sulfate</keyword>
<keyword id="KW-0358">Heparin-binding</keyword>
<keyword id="KW-0472">Membrane</keyword>
<keyword id="KW-0479">Metal-binding</keyword>
<keyword id="KW-0496">Mitochondrion</keyword>
<keyword id="KW-0524">Neurogenesis</keyword>
<keyword id="KW-0597">Phosphoprotein</keyword>
<keyword id="KW-0654">Proteoglycan</keyword>
<keyword id="KW-0675">Receptor</keyword>
<keyword id="KW-1185">Reference proteome</keyword>
<keyword id="KW-0677">Repeat</keyword>
<keyword id="KW-0732">Signal</keyword>
<keyword id="KW-0812">Transmembrane</keyword>
<keyword id="KW-1133">Transmembrane helix</keyword>
<organism>
    <name type="scientific">Rattus norvegicus</name>
    <name type="common">Rat</name>
    <dbReference type="NCBI Taxonomy" id="10116"/>
    <lineage>
        <taxon>Eukaryota</taxon>
        <taxon>Metazoa</taxon>
        <taxon>Chordata</taxon>
        <taxon>Craniata</taxon>
        <taxon>Vertebrata</taxon>
        <taxon>Euteleostomi</taxon>
        <taxon>Mammalia</taxon>
        <taxon>Eutheria</taxon>
        <taxon>Euarchontoglires</taxon>
        <taxon>Glires</taxon>
        <taxon>Rodentia</taxon>
        <taxon>Myomorpha</taxon>
        <taxon>Muroidea</taxon>
        <taxon>Muridae</taxon>
        <taxon>Murinae</taxon>
        <taxon>Rattus</taxon>
    </lineage>
</organism>
<dbReference type="EMBL" id="AF016296">
    <property type="protein sequence ID" value="AAC53337.1"/>
    <property type="molecule type" value="mRNA"/>
</dbReference>
<dbReference type="EMBL" id="BC085689">
    <property type="protein sequence ID" value="AAH85689.1"/>
    <property type="molecule type" value="mRNA"/>
</dbReference>
<dbReference type="RefSeq" id="NP_001420906.1">
    <property type="nucleotide sequence ID" value="NM_001433977.1"/>
</dbReference>
<dbReference type="RefSeq" id="NP_659566.1">
    <property type="nucleotide sequence ID" value="NM_145098.2"/>
</dbReference>
<dbReference type="RefSeq" id="XP_006255887.1">
    <property type="nucleotide sequence ID" value="XM_006255825.5"/>
</dbReference>
<dbReference type="PDB" id="2ORX">
    <property type="method" value="X-ray"/>
    <property type="resolution" value="2.40 A"/>
    <property type="chains" value="A=273-586"/>
</dbReference>
<dbReference type="PDB" id="2ORZ">
    <property type="method" value="X-ray"/>
    <property type="resolution" value="2.15 A"/>
    <property type="chains" value="A=273-586"/>
</dbReference>
<dbReference type="PDBsum" id="2ORX"/>
<dbReference type="PDBsum" id="2ORZ"/>
<dbReference type="SMR" id="Q9QWJ9"/>
<dbReference type="BioGRID" id="251596">
    <property type="interactions" value="4"/>
</dbReference>
<dbReference type="DIP" id="DIP-44935N"/>
<dbReference type="FunCoup" id="Q9QWJ9">
    <property type="interactions" value="1000"/>
</dbReference>
<dbReference type="IntAct" id="Q9QWJ9">
    <property type="interactions" value="2"/>
</dbReference>
<dbReference type="STRING" id="10116.ENSRNOP00000075034"/>
<dbReference type="BindingDB" id="Q9QWJ9"/>
<dbReference type="ChEMBL" id="CHEMBL3309098"/>
<dbReference type="GlyCosmos" id="Q9QWJ9">
    <property type="glycosylation" value="6 sites, No reported glycans"/>
</dbReference>
<dbReference type="GlyGen" id="Q9QWJ9">
    <property type="glycosylation" value="8 sites"/>
</dbReference>
<dbReference type="iPTMnet" id="Q9QWJ9"/>
<dbReference type="PhosphoSitePlus" id="Q9QWJ9"/>
<dbReference type="SwissPalm" id="Q9QWJ9"/>
<dbReference type="PaxDb" id="10116-ENSRNOP00000014492"/>
<dbReference type="Ensembl" id="ENSRNOT00000014492.6">
    <property type="protein sequence ID" value="ENSRNOP00000014492.3"/>
    <property type="gene ID" value="ENSRNOG00000010744.6"/>
</dbReference>
<dbReference type="GeneID" id="246331"/>
<dbReference type="KEGG" id="rno:246331"/>
<dbReference type="UCSC" id="RGD:621588">
    <property type="organism name" value="rat"/>
</dbReference>
<dbReference type="AGR" id="RGD:621588"/>
<dbReference type="CTD" id="8829"/>
<dbReference type="RGD" id="621588">
    <property type="gene designation" value="Nrp1"/>
</dbReference>
<dbReference type="eggNOG" id="ENOG502QUEH">
    <property type="taxonomic scope" value="Eukaryota"/>
</dbReference>
<dbReference type="GeneTree" id="ENSGT00940000157169"/>
<dbReference type="HOGENOM" id="CLU_015228_6_1_1"/>
<dbReference type="InParanoid" id="Q9QWJ9"/>
<dbReference type="OMA" id="QEDCTKP"/>
<dbReference type="OrthoDB" id="6155811at2759"/>
<dbReference type="PhylomeDB" id="Q9QWJ9"/>
<dbReference type="TreeFam" id="TF316506"/>
<dbReference type="Reactome" id="R-RNO-194306">
    <property type="pathway name" value="Neurophilin interactions with VEGF and VEGFR"/>
</dbReference>
<dbReference type="Reactome" id="R-RNO-399954">
    <property type="pathway name" value="Sema3A PAK dependent Axon repulsion"/>
</dbReference>
<dbReference type="Reactome" id="R-RNO-399955">
    <property type="pathway name" value="SEMA3A-Plexin repulsion signaling by inhibiting Integrin adhesion"/>
</dbReference>
<dbReference type="Reactome" id="R-RNO-399956">
    <property type="pathway name" value="CRMPs in Sema3A signaling"/>
</dbReference>
<dbReference type="Reactome" id="R-RNO-445144">
    <property type="pathway name" value="Signal transduction by L1"/>
</dbReference>
<dbReference type="EvolutionaryTrace" id="Q9QWJ9"/>
<dbReference type="PRO" id="PR:Q9QWJ9"/>
<dbReference type="Proteomes" id="UP000002494">
    <property type="component" value="Chromosome 19"/>
</dbReference>
<dbReference type="Bgee" id="ENSRNOG00000010744">
    <property type="expression patterns" value="Expressed in lung and 19 other cell types or tissues"/>
</dbReference>
<dbReference type="GO" id="GO:0030424">
    <property type="term" value="C:axon"/>
    <property type="evidence" value="ECO:0000314"/>
    <property type="project" value="RGD"/>
</dbReference>
<dbReference type="GO" id="GO:0009986">
    <property type="term" value="C:cell surface"/>
    <property type="evidence" value="ECO:0000314"/>
    <property type="project" value="RGD"/>
</dbReference>
<dbReference type="GO" id="GO:0005829">
    <property type="term" value="C:cytosol"/>
    <property type="evidence" value="ECO:0000266"/>
    <property type="project" value="RGD"/>
</dbReference>
<dbReference type="GO" id="GO:0005769">
    <property type="term" value="C:early endosome"/>
    <property type="evidence" value="ECO:0000266"/>
    <property type="project" value="RGD"/>
</dbReference>
<dbReference type="GO" id="GO:0005925">
    <property type="term" value="C:focal adhesion"/>
    <property type="evidence" value="ECO:0000266"/>
    <property type="project" value="RGD"/>
</dbReference>
<dbReference type="GO" id="GO:0098978">
    <property type="term" value="C:glutamatergic synapse"/>
    <property type="evidence" value="ECO:0000266"/>
    <property type="project" value="RGD"/>
</dbReference>
<dbReference type="GO" id="GO:0030426">
    <property type="term" value="C:growth cone"/>
    <property type="evidence" value="ECO:0000314"/>
    <property type="project" value="RGD"/>
</dbReference>
<dbReference type="GO" id="GO:0031966">
    <property type="term" value="C:mitochondrial membrane"/>
    <property type="evidence" value="ECO:0007669"/>
    <property type="project" value="UniProtKB-SubCell"/>
</dbReference>
<dbReference type="GO" id="GO:0005883">
    <property type="term" value="C:neurofilament"/>
    <property type="evidence" value="ECO:0000266"/>
    <property type="project" value="RGD"/>
</dbReference>
<dbReference type="GO" id="GO:0043005">
    <property type="term" value="C:neuron projection"/>
    <property type="evidence" value="ECO:0000266"/>
    <property type="project" value="RGD"/>
</dbReference>
<dbReference type="GO" id="GO:0043025">
    <property type="term" value="C:neuronal cell body"/>
    <property type="evidence" value="ECO:0000314"/>
    <property type="project" value="RGD"/>
</dbReference>
<dbReference type="GO" id="GO:0005886">
    <property type="term" value="C:plasma membrane"/>
    <property type="evidence" value="ECO:0000266"/>
    <property type="project" value="RGD"/>
</dbReference>
<dbReference type="GO" id="GO:0045211">
    <property type="term" value="C:postsynaptic membrane"/>
    <property type="evidence" value="ECO:0000266"/>
    <property type="project" value="RGD"/>
</dbReference>
<dbReference type="GO" id="GO:0097443">
    <property type="term" value="C:sorting endosome"/>
    <property type="evidence" value="ECO:0000266"/>
    <property type="project" value="RGD"/>
</dbReference>
<dbReference type="GO" id="GO:0019838">
    <property type="term" value="F:growth factor binding"/>
    <property type="evidence" value="ECO:0000266"/>
    <property type="project" value="RGD"/>
</dbReference>
<dbReference type="GO" id="GO:0005096">
    <property type="term" value="F:GTPase activator activity"/>
    <property type="evidence" value="ECO:0000266"/>
    <property type="project" value="RGD"/>
</dbReference>
<dbReference type="GO" id="GO:0008201">
    <property type="term" value="F:heparin binding"/>
    <property type="evidence" value="ECO:0007669"/>
    <property type="project" value="UniProtKB-KW"/>
</dbReference>
<dbReference type="GO" id="GO:0046872">
    <property type="term" value="F:metal ion binding"/>
    <property type="evidence" value="ECO:0007669"/>
    <property type="project" value="UniProtKB-KW"/>
</dbReference>
<dbReference type="GO" id="GO:0019901">
    <property type="term" value="F:protein kinase binding"/>
    <property type="evidence" value="ECO:0000266"/>
    <property type="project" value="RGD"/>
</dbReference>
<dbReference type="GO" id="GO:0017154">
    <property type="term" value="F:semaphorin receptor activity"/>
    <property type="evidence" value="ECO:0000315"/>
    <property type="project" value="RGD"/>
</dbReference>
<dbReference type="GO" id="GO:0038085">
    <property type="term" value="F:vascular endothelial growth factor binding"/>
    <property type="evidence" value="ECO:0000266"/>
    <property type="project" value="RGD"/>
</dbReference>
<dbReference type="GO" id="GO:0005021">
    <property type="term" value="F:vascular endothelial growth factor receptor activity"/>
    <property type="evidence" value="ECO:0000266"/>
    <property type="project" value="RGD"/>
</dbReference>
<dbReference type="GO" id="GO:0001525">
    <property type="term" value="P:angiogenesis"/>
    <property type="evidence" value="ECO:0000266"/>
    <property type="project" value="RGD"/>
</dbReference>
<dbReference type="GO" id="GO:0060978">
    <property type="term" value="P:angiogenesis involved in coronary vascular morphogenesis"/>
    <property type="evidence" value="ECO:0000266"/>
    <property type="project" value="RGD"/>
</dbReference>
<dbReference type="GO" id="GO:0048844">
    <property type="term" value="P:artery morphogenesis"/>
    <property type="evidence" value="ECO:0000266"/>
    <property type="project" value="RGD"/>
</dbReference>
<dbReference type="GO" id="GO:0048675">
    <property type="term" value="P:axon extension"/>
    <property type="evidence" value="ECO:0000266"/>
    <property type="project" value="RGD"/>
</dbReference>
<dbReference type="GO" id="GO:0048846">
    <property type="term" value="P:axon extension involved in axon guidance"/>
    <property type="evidence" value="ECO:0000266"/>
    <property type="project" value="RGD"/>
</dbReference>
<dbReference type="GO" id="GO:0007411">
    <property type="term" value="P:axon guidance"/>
    <property type="evidence" value="ECO:0000266"/>
    <property type="project" value="RGD"/>
</dbReference>
<dbReference type="GO" id="GO:0007413">
    <property type="term" value="P:axonal fasciculation"/>
    <property type="evidence" value="ECO:0000266"/>
    <property type="project" value="RGD"/>
</dbReference>
<dbReference type="GO" id="GO:0060385">
    <property type="term" value="P:axonogenesis involved in innervation"/>
    <property type="evidence" value="ECO:0000266"/>
    <property type="project" value="RGD"/>
</dbReference>
<dbReference type="GO" id="GO:0150020">
    <property type="term" value="P:basal dendrite arborization"/>
    <property type="evidence" value="ECO:0000266"/>
    <property type="project" value="RGD"/>
</dbReference>
<dbReference type="GO" id="GO:0150018">
    <property type="term" value="P:basal dendrite development"/>
    <property type="evidence" value="ECO:0000266"/>
    <property type="project" value="RGD"/>
</dbReference>
<dbReference type="GO" id="GO:0043534">
    <property type="term" value="P:blood vessel endothelial cell migration"/>
    <property type="evidence" value="ECO:0000266"/>
    <property type="project" value="RGD"/>
</dbReference>
<dbReference type="GO" id="GO:0001569">
    <property type="term" value="P:branching involved in blood vessel morphogenesis"/>
    <property type="evidence" value="ECO:0000266"/>
    <property type="project" value="RGD"/>
</dbReference>
<dbReference type="GO" id="GO:0021785">
    <property type="term" value="P:branchiomotor neuron axon guidance"/>
    <property type="evidence" value="ECO:0000266"/>
    <property type="project" value="RGD"/>
</dbReference>
<dbReference type="GO" id="GO:0002042">
    <property type="term" value="P:cell migration involved in sprouting angiogenesis"/>
    <property type="evidence" value="ECO:0000266"/>
    <property type="project" value="RGD"/>
</dbReference>
<dbReference type="GO" id="GO:0035729">
    <property type="term" value="P:cellular response to hepatocyte growth factor stimulus"/>
    <property type="evidence" value="ECO:0000266"/>
    <property type="project" value="RGD"/>
</dbReference>
<dbReference type="GO" id="GO:0035924">
    <property type="term" value="P:cellular response to vascular endothelial growth factor stimulus"/>
    <property type="evidence" value="ECO:0000266"/>
    <property type="project" value="RGD"/>
</dbReference>
<dbReference type="GO" id="GO:0071679">
    <property type="term" value="P:commissural neuron axon guidance"/>
    <property type="evidence" value="ECO:0000266"/>
    <property type="project" value="RGD"/>
</dbReference>
<dbReference type="GO" id="GO:0060982">
    <property type="term" value="P:coronary artery morphogenesis"/>
    <property type="evidence" value="ECO:0000266"/>
    <property type="project" value="RGD"/>
</dbReference>
<dbReference type="GO" id="GO:0016358">
    <property type="term" value="P:dendrite development"/>
    <property type="evidence" value="ECO:0000266"/>
    <property type="project" value="RGD"/>
</dbReference>
<dbReference type="GO" id="GO:0060666">
    <property type="term" value="P:dichotomous subdivision of terminal units involved in salivary gland branching"/>
    <property type="evidence" value="ECO:0000266"/>
    <property type="project" value="RGD"/>
</dbReference>
<dbReference type="GO" id="GO:1904835">
    <property type="term" value="P:dorsal root ganglion morphogenesis"/>
    <property type="evidence" value="ECO:0000266"/>
    <property type="project" value="RGD"/>
</dbReference>
<dbReference type="GO" id="GO:0035767">
    <property type="term" value="P:endothelial cell chemotaxis"/>
    <property type="evidence" value="ECO:0000266"/>
    <property type="project" value="RGD"/>
</dbReference>
<dbReference type="GO" id="GO:0043542">
    <property type="term" value="P:endothelial cell migration"/>
    <property type="evidence" value="ECO:0000266"/>
    <property type="project" value="RGD"/>
</dbReference>
<dbReference type="GO" id="GO:0021612">
    <property type="term" value="P:facial nerve structural organization"/>
    <property type="evidence" value="ECO:0000266"/>
    <property type="project" value="RGD"/>
</dbReference>
<dbReference type="GO" id="GO:1903375">
    <property type="term" value="P:facioacoustic ganglion development"/>
    <property type="evidence" value="ECO:0000266"/>
    <property type="project" value="RGD"/>
</dbReference>
<dbReference type="GO" id="GO:0021828">
    <property type="term" value="P:gonadotrophin-releasing hormone neuronal migration to the hypothalamus"/>
    <property type="evidence" value="ECO:0000266"/>
    <property type="project" value="RGD"/>
</dbReference>
<dbReference type="GO" id="GO:0007507">
    <property type="term" value="P:heart development"/>
    <property type="evidence" value="ECO:0000266"/>
    <property type="project" value="RGD"/>
</dbReference>
<dbReference type="GO" id="GO:0048012">
    <property type="term" value="P:hepatocyte growth factor receptor signaling pathway"/>
    <property type="evidence" value="ECO:0000266"/>
    <property type="project" value="RGD"/>
</dbReference>
<dbReference type="GO" id="GO:0007229">
    <property type="term" value="P:integrin-mediated signaling pathway"/>
    <property type="evidence" value="ECO:0000266"/>
    <property type="project" value="RGD"/>
</dbReference>
<dbReference type="GO" id="GO:0008045">
    <property type="term" value="P:motor neuron axon guidance"/>
    <property type="evidence" value="ECO:0000266"/>
    <property type="project" value="RGD"/>
</dbReference>
<dbReference type="GO" id="GO:0097475">
    <property type="term" value="P:motor neuron migration"/>
    <property type="evidence" value="ECO:0000250"/>
    <property type="project" value="UniProtKB"/>
</dbReference>
<dbReference type="GO" id="GO:0030517">
    <property type="term" value="P:negative regulation of axon extension"/>
    <property type="evidence" value="ECO:0000266"/>
    <property type="project" value="RGD"/>
</dbReference>
<dbReference type="GO" id="GO:0048843">
    <property type="term" value="P:negative regulation of axon extension involved in axon guidance"/>
    <property type="evidence" value="ECO:0000315"/>
    <property type="project" value="RGD"/>
</dbReference>
<dbReference type="GO" id="GO:2001237">
    <property type="term" value="P:negative regulation of extrinsic apoptotic signaling pathway"/>
    <property type="evidence" value="ECO:0000266"/>
    <property type="project" value="RGD"/>
</dbReference>
<dbReference type="GO" id="GO:0043524">
    <property type="term" value="P:negative regulation of neuron apoptotic process"/>
    <property type="evidence" value="ECO:0000266"/>
    <property type="project" value="RGD"/>
</dbReference>
<dbReference type="GO" id="GO:0007399">
    <property type="term" value="P:nervous system development"/>
    <property type="evidence" value="ECO:0000303"/>
    <property type="project" value="RGD"/>
</dbReference>
<dbReference type="GO" id="GO:0001755">
    <property type="term" value="P:neural crest cell migration"/>
    <property type="evidence" value="ECO:0000318"/>
    <property type="project" value="GO_Central"/>
</dbReference>
<dbReference type="GO" id="GO:1901166">
    <property type="term" value="P:neural crest cell migration involved in autonomic nervous system development"/>
    <property type="evidence" value="ECO:0000266"/>
    <property type="project" value="RGD"/>
</dbReference>
<dbReference type="GO" id="GO:0048666">
    <property type="term" value="P:neuron development"/>
    <property type="evidence" value="ECO:0000266"/>
    <property type="project" value="RGD"/>
</dbReference>
<dbReference type="GO" id="GO:0001764">
    <property type="term" value="P:neuron migration"/>
    <property type="evidence" value="ECO:0000266"/>
    <property type="project" value="RGD"/>
</dbReference>
<dbReference type="GO" id="GO:0038189">
    <property type="term" value="P:neuropilin signaling pathway"/>
    <property type="evidence" value="ECO:0000266"/>
    <property type="project" value="RGD"/>
</dbReference>
<dbReference type="GO" id="GO:1905040">
    <property type="term" value="P:otic placode development"/>
    <property type="evidence" value="ECO:0000266"/>
    <property type="project" value="RGD"/>
</dbReference>
<dbReference type="GO" id="GO:0003148">
    <property type="term" value="P:outflow tract septum morphogenesis"/>
    <property type="evidence" value="ECO:0000266"/>
    <property type="project" value="RGD"/>
</dbReference>
<dbReference type="GO" id="GO:0048008">
    <property type="term" value="P:platelet-derived growth factor receptor signaling pathway"/>
    <property type="evidence" value="ECO:0000266"/>
    <property type="project" value="RGD"/>
</dbReference>
<dbReference type="GO" id="GO:0050918">
    <property type="term" value="P:positive chemotaxis"/>
    <property type="evidence" value="ECO:0000266"/>
    <property type="project" value="RGD"/>
</dbReference>
<dbReference type="GO" id="GO:0045766">
    <property type="term" value="P:positive regulation of angiogenesis"/>
    <property type="evidence" value="ECO:0000266"/>
    <property type="project" value="RGD"/>
</dbReference>
<dbReference type="GO" id="GO:0048842">
    <property type="term" value="P:positive regulation of axon extension involved in axon guidance"/>
    <property type="evidence" value="ECO:0000266"/>
    <property type="project" value="RGD"/>
</dbReference>
<dbReference type="GO" id="GO:0090050">
    <property type="term" value="P:positive regulation of cell migration involved in sprouting angiogenesis"/>
    <property type="evidence" value="ECO:0000266"/>
    <property type="project" value="RGD"/>
</dbReference>
<dbReference type="GO" id="GO:0010595">
    <property type="term" value="P:positive regulation of endothelial cell migration"/>
    <property type="evidence" value="ECO:0000266"/>
    <property type="project" value="RGD"/>
</dbReference>
<dbReference type="GO" id="GO:0070374">
    <property type="term" value="P:positive regulation of ERK1 and ERK2 cascade"/>
    <property type="evidence" value="ECO:0000266"/>
    <property type="project" value="RGD"/>
</dbReference>
<dbReference type="GO" id="GO:0051491">
    <property type="term" value="P:positive regulation of filopodium assembly"/>
    <property type="evidence" value="ECO:0000266"/>
    <property type="project" value="RGD"/>
</dbReference>
<dbReference type="GO" id="GO:0051894">
    <property type="term" value="P:positive regulation of focal adhesion assembly"/>
    <property type="evidence" value="ECO:0000266"/>
    <property type="project" value="RGD"/>
</dbReference>
<dbReference type="GO" id="GO:0042327">
    <property type="term" value="P:positive regulation of phosphorylation"/>
    <property type="evidence" value="ECO:0000266"/>
    <property type="project" value="RGD"/>
</dbReference>
<dbReference type="GO" id="GO:0010641">
    <property type="term" value="P:positive regulation of platelet-derived growth factor receptor signaling pathway"/>
    <property type="evidence" value="ECO:0000315"/>
    <property type="project" value="RGD"/>
</dbReference>
<dbReference type="GO" id="GO:0071673">
    <property type="term" value="P:positive regulation of smooth muscle cell chemotaxis"/>
    <property type="evidence" value="ECO:0000315"/>
    <property type="project" value="RGD"/>
</dbReference>
<dbReference type="GO" id="GO:0051496">
    <property type="term" value="P:positive regulation of stress fiber assembly"/>
    <property type="evidence" value="ECO:0000266"/>
    <property type="project" value="RGD"/>
</dbReference>
<dbReference type="GO" id="GO:1900026">
    <property type="term" value="P:positive regulation of substrate adhesion-dependent cell spreading"/>
    <property type="evidence" value="ECO:0000266"/>
    <property type="project" value="RGD"/>
</dbReference>
<dbReference type="GO" id="GO:1904754">
    <property type="term" value="P:positive regulation of vascular associated smooth muscle cell migration"/>
    <property type="evidence" value="ECO:0000315"/>
    <property type="project" value="RGD"/>
</dbReference>
<dbReference type="GO" id="GO:0099173">
    <property type="term" value="P:postsynapse organization"/>
    <property type="evidence" value="ECO:0000266"/>
    <property type="project" value="RGD"/>
</dbReference>
<dbReference type="GO" id="GO:1902946">
    <property type="term" value="P:protein localization to early endosome"/>
    <property type="evidence" value="ECO:0000266"/>
    <property type="project" value="RGD"/>
</dbReference>
<dbReference type="GO" id="GO:0048841">
    <property type="term" value="P:regulation of axon extension involved in axon guidance"/>
    <property type="evidence" value="ECO:0000266"/>
    <property type="project" value="RGD"/>
</dbReference>
<dbReference type="GO" id="GO:0032489">
    <property type="term" value="P:regulation of Cdc42 protein signal transduction"/>
    <property type="evidence" value="ECO:0000266"/>
    <property type="project" value="RGD"/>
</dbReference>
<dbReference type="GO" id="GO:0030947">
    <property type="term" value="P:regulation of vascular endothelial growth factor receptor signaling pathway"/>
    <property type="evidence" value="ECO:0000318"/>
    <property type="project" value="GO_Central"/>
</dbReference>
<dbReference type="GO" id="GO:0061441">
    <property type="term" value="P:renal artery morphogenesis"/>
    <property type="evidence" value="ECO:0000266"/>
    <property type="project" value="RGD"/>
</dbReference>
<dbReference type="GO" id="GO:0009611">
    <property type="term" value="P:response to wounding"/>
    <property type="evidence" value="ECO:0000318"/>
    <property type="project" value="GO_Central"/>
</dbReference>
<dbReference type="GO" id="GO:0061298">
    <property type="term" value="P:retina vasculature development in camera-type eye"/>
    <property type="evidence" value="ECO:0000266"/>
    <property type="project" value="RGD"/>
</dbReference>
<dbReference type="GO" id="GO:0061299">
    <property type="term" value="P:retina vasculature morphogenesis in camera-type eye"/>
    <property type="evidence" value="ECO:0000266"/>
    <property type="project" value="RGD"/>
</dbReference>
<dbReference type="GO" id="GO:0031290">
    <property type="term" value="P:retinal ganglion cell axon guidance"/>
    <property type="evidence" value="ECO:0000266"/>
    <property type="project" value="RGD"/>
</dbReference>
<dbReference type="GO" id="GO:0071526">
    <property type="term" value="P:semaphorin-plexin signaling pathway"/>
    <property type="evidence" value="ECO:0000266"/>
    <property type="project" value="RGD"/>
</dbReference>
<dbReference type="GO" id="GO:0097374">
    <property type="term" value="P:sensory neuron axon guidance"/>
    <property type="evidence" value="ECO:0000266"/>
    <property type="project" value="RGD"/>
</dbReference>
<dbReference type="GO" id="GO:0002040">
    <property type="term" value="P:sprouting angiogenesis"/>
    <property type="evidence" value="ECO:0000266"/>
    <property type="project" value="RGD"/>
</dbReference>
<dbReference type="GO" id="GO:0006930">
    <property type="term" value="P:substrate-dependent cell migration, cell extension"/>
    <property type="evidence" value="ECO:0000266"/>
    <property type="project" value="RGD"/>
</dbReference>
<dbReference type="GO" id="GO:0061549">
    <property type="term" value="P:sympathetic ganglion development"/>
    <property type="evidence" value="ECO:0000266"/>
    <property type="project" value="RGD"/>
</dbReference>
<dbReference type="GO" id="GO:0048485">
    <property type="term" value="P:sympathetic nervous system development"/>
    <property type="evidence" value="ECO:0000266"/>
    <property type="project" value="RGD"/>
</dbReference>
<dbReference type="GO" id="GO:0097490">
    <property type="term" value="P:sympathetic neuron projection extension"/>
    <property type="evidence" value="ECO:0000266"/>
    <property type="project" value="RGD"/>
</dbReference>
<dbReference type="GO" id="GO:0097491">
    <property type="term" value="P:sympathetic neuron projection guidance"/>
    <property type="evidence" value="ECO:0000266"/>
    <property type="project" value="RGD"/>
</dbReference>
<dbReference type="GO" id="GO:0061551">
    <property type="term" value="P:trigeminal ganglion development"/>
    <property type="evidence" value="ECO:0000266"/>
    <property type="project" value="RGD"/>
</dbReference>
<dbReference type="GO" id="GO:0021636">
    <property type="term" value="P:trigeminal nerve morphogenesis"/>
    <property type="evidence" value="ECO:0000266"/>
    <property type="project" value="RGD"/>
</dbReference>
<dbReference type="GO" id="GO:0021637">
    <property type="term" value="P:trigeminal nerve structural organization"/>
    <property type="evidence" value="ECO:0000266"/>
    <property type="project" value="RGD"/>
</dbReference>
<dbReference type="GO" id="GO:0048010">
    <property type="term" value="P:vascular endothelial growth factor receptor signaling pathway"/>
    <property type="evidence" value="ECO:0000266"/>
    <property type="project" value="RGD"/>
</dbReference>
<dbReference type="GO" id="GO:0001570">
    <property type="term" value="P:vasculogenesis"/>
    <property type="evidence" value="ECO:0000318"/>
    <property type="project" value="GO_Central"/>
</dbReference>
<dbReference type="GO" id="GO:0038190">
    <property type="term" value="P:VEGF-activated neuropilin signaling pathway"/>
    <property type="evidence" value="ECO:0000266"/>
    <property type="project" value="RGD"/>
</dbReference>
<dbReference type="GO" id="GO:0036486">
    <property type="term" value="P:ventral trunk neural crest cell migration"/>
    <property type="evidence" value="ECO:0000266"/>
    <property type="project" value="RGD"/>
</dbReference>
<dbReference type="GO" id="GO:0021649">
    <property type="term" value="P:vestibulocochlear nerve structural organization"/>
    <property type="evidence" value="ECO:0000266"/>
    <property type="project" value="RGD"/>
</dbReference>
<dbReference type="GO" id="GO:0042060">
    <property type="term" value="P:wound healing"/>
    <property type="evidence" value="ECO:0000315"/>
    <property type="project" value="RGD"/>
</dbReference>
<dbReference type="CDD" id="cd00041">
    <property type="entry name" value="CUB"/>
    <property type="match status" value="2"/>
</dbReference>
<dbReference type="CDD" id="cd00057">
    <property type="entry name" value="FA58C"/>
    <property type="match status" value="2"/>
</dbReference>
<dbReference type="CDD" id="cd06263">
    <property type="entry name" value="MAM"/>
    <property type="match status" value="1"/>
</dbReference>
<dbReference type="FunFam" id="2.60.120.260:FF:000002">
    <property type="entry name" value="Coagulation factor VIII"/>
    <property type="match status" value="1"/>
</dbReference>
<dbReference type="FunFam" id="2.60.120.200:FF:000043">
    <property type="entry name" value="Neuropilin"/>
    <property type="match status" value="1"/>
</dbReference>
<dbReference type="FunFam" id="2.60.120.260:FF:000013">
    <property type="entry name" value="Neuropilin"/>
    <property type="match status" value="1"/>
</dbReference>
<dbReference type="FunFam" id="2.60.120.290:FF:000003">
    <property type="entry name" value="Neuropilin"/>
    <property type="match status" value="1"/>
</dbReference>
<dbReference type="FunFam" id="2.60.120.290:FF:000010">
    <property type="entry name" value="Neuropilin"/>
    <property type="match status" value="1"/>
</dbReference>
<dbReference type="Gene3D" id="2.60.120.200">
    <property type="match status" value="1"/>
</dbReference>
<dbReference type="Gene3D" id="2.60.120.260">
    <property type="entry name" value="Galactose-binding domain-like"/>
    <property type="match status" value="2"/>
</dbReference>
<dbReference type="Gene3D" id="2.60.120.290">
    <property type="entry name" value="Spermadhesin, CUB domain"/>
    <property type="match status" value="2"/>
</dbReference>
<dbReference type="InterPro" id="IPR013320">
    <property type="entry name" value="ConA-like_dom_sf"/>
</dbReference>
<dbReference type="InterPro" id="IPR000859">
    <property type="entry name" value="CUB_dom"/>
</dbReference>
<dbReference type="InterPro" id="IPR000421">
    <property type="entry name" value="FA58C"/>
</dbReference>
<dbReference type="InterPro" id="IPR008979">
    <property type="entry name" value="Galactose-bd-like_sf"/>
</dbReference>
<dbReference type="InterPro" id="IPR000998">
    <property type="entry name" value="MAM_dom"/>
</dbReference>
<dbReference type="InterPro" id="IPR014648">
    <property type="entry name" value="Neuropilin"/>
</dbReference>
<dbReference type="InterPro" id="IPR022579">
    <property type="entry name" value="Neuropilin_C"/>
</dbReference>
<dbReference type="InterPro" id="IPR050633">
    <property type="entry name" value="Neuropilin_MCO_CoagFactor"/>
</dbReference>
<dbReference type="InterPro" id="IPR035914">
    <property type="entry name" value="Sperma_CUB_dom_sf"/>
</dbReference>
<dbReference type="PANTHER" id="PTHR46806">
    <property type="entry name" value="F5/8 TYPE C DOMAIN-CONTAINING PROTEIN"/>
    <property type="match status" value="1"/>
</dbReference>
<dbReference type="PANTHER" id="PTHR46806:SF4">
    <property type="entry name" value="NEUROPILIN-1"/>
    <property type="match status" value="1"/>
</dbReference>
<dbReference type="Pfam" id="PF00431">
    <property type="entry name" value="CUB"/>
    <property type="match status" value="2"/>
</dbReference>
<dbReference type="Pfam" id="PF11980">
    <property type="entry name" value="DUF3481"/>
    <property type="match status" value="1"/>
</dbReference>
<dbReference type="Pfam" id="PF00754">
    <property type="entry name" value="F5_F8_type_C"/>
    <property type="match status" value="2"/>
</dbReference>
<dbReference type="Pfam" id="PF00629">
    <property type="entry name" value="MAM"/>
    <property type="match status" value="1"/>
</dbReference>
<dbReference type="PIRSF" id="PIRSF036960">
    <property type="entry name" value="Neuropilin"/>
    <property type="match status" value="1"/>
</dbReference>
<dbReference type="PRINTS" id="PR00020">
    <property type="entry name" value="MAMDOMAIN"/>
</dbReference>
<dbReference type="SMART" id="SM00042">
    <property type="entry name" value="CUB"/>
    <property type="match status" value="2"/>
</dbReference>
<dbReference type="SMART" id="SM00231">
    <property type="entry name" value="FA58C"/>
    <property type="match status" value="2"/>
</dbReference>
<dbReference type="SMART" id="SM00137">
    <property type="entry name" value="MAM"/>
    <property type="match status" value="1"/>
</dbReference>
<dbReference type="SUPFAM" id="SSF49899">
    <property type="entry name" value="Concanavalin A-like lectins/glucanases"/>
    <property type="match status" value="1"/>
</dbReference>
<dbReference type="SUPFAM" id="SSF49785">
    <property type="entry name" value="Galactose-binding domain-like"/>
    <property type="match status" value="2"/>
</dbReference>
<dbReference type="SUPFAM" id="SSF49854">
    <property type="entry name" value="Spermadhesin, CUB domain"/>
    <property type="match status" value="2"/>
</dbReference>
<dbReference type="PROSITE" id="PS01180">
    <property type="entry name" value="CUB"/>
    <property type="match status" value="2"/>
</dbReference>
<dbReference type="PROSITE" id="PS01285">
    <property type="entry name" value="FA58C_1"/>
    <property type="match status" value="2"/>
</dbReference>
<dbReference type="PROSITE" id="PS01286">
    <property type="entry name" value="FA58C_2"/>
    <property type="match status" value="2"/>
</dbReference>
<dbReference type="PROSITE" id="PS50022">
    <property type="entry name" value="FA58C_3"/>
    <property type="match status" value="2"/>
</dbReference>
<dbReference type="PROSITE" id="PS00740">
    <property type="entry name" value="MAM_1"/>
    <property type="match status" value="1"/>
</dbReference>
<dbReference type="PROSITE" id="PS50060">
    <property type="entry name" value="MAM_2"/>
    <property type="match status" value="1"/>
</dbReference>